<name>CLPX_ECOLU</name>
<dbReference type="EMBL" id="CU928163">
    <property type="protein sequence ID" value="CAR11693.1"/>
    <property type="molecule type" value="Genomic_DNA"/>
</dbReference>
<dbReference type="RefSeq" id="WP_000130305.1">
    <property type="nucleotide sequence ID" value="NC_011751.1"/>
</dbReference>
<dbReference type="RefSeq" id="YP_002411241.1">
    <property type="nucleotide sequence ID" value="NC_011751.1"/>
</dbReference>
<dbReference type="SMR" id="B7N8Z2"/>
<dbReference type="STRING" id="585056.ECUMN_0478"/>
<dbReference type="GeneID" id="93777016"/>
<dbReference type="KEGG" id="eum:ECUMN_0478"/>
<dbReference type="PATRIC" id="fig|585056.7.peg.683"/>
<dbReference type="HOGENOM" id="CLU_014218_8_2_6"/>
<dbReference type="Proteomes" id="UP000007097">
    <property type="component" value="Chromosome"/>
</dbReference>
<dbReference type="GO" id="GO:0009376">
    <property type="term" value="C:HslUV protease complex"/>
    <property type="evidence" value="ECO:0007669"/>
    <property type="project" value="TreeGrafter"/>
</dbReference>
<dbReference type="GO" id="GO:0005524">
    <property type="term" value="F:ATP binding"/>
    <property type="evidence" value="ECO:0007669"/>
    <property type="project" value="UniProtKB-UniRule"/>
</dbReference>
<dbReference type="GO" id="GO:0016887">
    <property type="term" value="F:ATP hydrolysis activity"/>
    <property type="evidence" value="ECO:0007669"/>
    <property type="project" value="InterPro"/>
</dbReference>
<dbReference type="GO" id="GO:0140662">
    <property type="term" value="F:ATP-dependent protein folding chaperone"/>
    <property type="evidence" value="ECO:0007669"/>
    <property type="project" value="InterPro"/>
</dbReference>
<dbReference type="GO" id="GO:0046983">
    <property type="term" value="F:protein dimerization activity"/>
    <property type="evidence" value="ECO:0007669"/>
    <property type="project" value="InterPro"/>
</dbReference>
<dbReference type="GO" id="GO:0051082">
    <property type="term" value="F:unfolded protein binding"/>
    <property type="evidence" value="ECO:0007669"/>
    <property type="project" value="UniProtKB-UniRule"/>
</dbReference>
<dbReference type="GO" id="GO:0008270">
    <property type="term" value="F:zinc ion binding"/>
    <property type="evidence" value="ECO:0007669"/>
    <property type="project" value="InterPro"/>
</dbReference>
<dbReference type="GO" id="GO:0051301">
    <property type="term" value="P:cell division"/>
    <property type="evidence" value="ECO:0007669"/>
    <property type="project" value="TreeGrafter"/>
</dbReference>
<dbReference type="GO" id="GO:0051603">
    <property type="term" value="P:proteolysis involved in protein catabolic process"/>
    <property type="evidence" value="ECO:0007669"/>
    <property type="project" value="TreeGrafter"/>
</dbReference>
<dbReference type="CDD" id="cd19497">
    <property type="entry name" value="RecA-like_ClpX"/>
    <property type="match status" value="1"/>
</dbReference>
<dbReference type="FunFam" id="1.10.8.60:FF:000002">
    <property type="entry name" value="ATP-dependent Clp protease ATP-binding subunit ClpX"/>
    <property type="match status" value="1"/>
</dbReference>
<dbReference type="FunFam" id="3.40.50.300:FF:000005">
    <property type="entry name" value="ATP-dependent Clp protease ATP-binding subunit ClpX"/>
    <property type="match status" value="1"/>
</dbReference>
<dbReference type="Gene3D" id="1.10.8.60">
    <property type="match status" value="1"/>
</dbReference>
<dbReference type="Gene3D" id="6.20.220.10">
    <property type="entry name" value="ClpX chaperone, C4-type zinc finger domain"/>
    <property type="match status" value="1"/>
</dbReference>
<dbReference type="Gene3D" id="3.40.50.300">
    <property type="entry name" value="P-loop containing nucleotide triphosphate hydrolases"/>
    <property type="match status" value="1"/>
</dbReference>
<dbReference type="HAMAP" id="MF_00175">
    <property type="entry name" value="ClpX"/>
    <property type="match status" value="1"/>
</dbReference>
<dbReference type="InterPro" id="IPR003593">
    <property type="entry name" value="AAA+_ATPase"/>
</dbReference>
<dbReference type="InterPro" id="IPR050052">
    <property type="entry name" value="ATP-dep_Clp_protease_ClpX"/>
</dbReference>
<dbReference type="InterPro" id="IPR003959">
    <property type="entry name" value="ATPase_AAA_core"/>
</dbReference>
<dbReference type="InterPro" id="IPR019489">
    <property type="entry name" value="Clp_ATPase_C"/>
</dbReference>
<dbReference type="InterPro" id="IPR004487">
    <property type="entry name" value="Clp_protease_ATP-bd_su_ClpX"/>
</dbReference>
<dbReference type="InterPro" id="IPR046425">
    <property type="entry name" value="ClpX_bact"/>
</dbReference>
<dbReference type="InterPro" id="IPR027417">
    <property type="entry name" value="P-loop_NTPase"/>
</dbReference>
<dbReference type="InterPro" id="IPR010603">
    <property type="entry name" value="Znf_CppX_C4"/>
</dbReference>
<dbReference type="InterPro" id="IPR038366">
    <property type="entry name" value="Znf_CppX_C4_sf"/>
</dbReference>
<dbReference type="NCBIfam" id="TIGR00382">
    <property type="entry name" value="clpX"/>
    <property type="match status" value="1"/>
</dbReference>
<dbReference type="NCBIfam" id="NF003745">
    <property type="entry name" value="PRK05342.1"/>
    <property type="match status" value="1"/>
</dbReference>
<dbReference type="PANTHER" id="PTHR48102:SF7">
    <property type="entry name" value="ATP-DEPENDENT CLP PROTEASE ATP-BINDING SUBUNIT CLPX-LIKE, MITOCHONDRIAL"/>
    <property type="match status" value="1"/>
</dbReference>
<dbReference type="PANTHER" id="PTHR48102">
    <property type="entry name" value="ATP-DEPENDENT CLP PROTEASE ATP-BINDING SUBUNIT CLPX-LIKE, MITOCHONDRIAL-RELATED"/>
    <property type="match status" value="1"/>
</dbReference>
<dbReference type="Pfam" id="PF07724">
    <property type="entry name" value="AAA_2"/>
    <property type="match status" value="1"/>
</dbReference>
<dbReference type="Pfam" id="PF10431">
    <property type="entry name" value="ClpB_D2-small"/>
    <property type="match status" value="1"/>
</dbReference>
<dbReference type="Pfam" id="PF06689">
    <property type="entry name" value="zf-C4_ClpX"/>
    <property type="match status" value="1"/>
</dbReference>
<dbReference type="SMART" id="SM00382">
    <property type="entry name" value="AAA"/>
    <property type="match status" value="1"/>
</dbReference>
<dbReference type="SMART" id="SM01086">
    <property type="entry name" value="ClpB_D2-small"/>
    <property type="match status" value="1"/>
</dbReference>
<dbReference type="SMART" id="SM00994">
    <property type="entry name" value="zf-C4_ClpX"/>
    <property type="match status" value="1"/>
</dbReference>
<dbReference type="SUPFAM" id="SSF57716">
    <property type="entry name" value="Glucocorticoid receptor-like (DNA-binding domain)"/>
    <property type="match status" value="1"/>
</dbReference>
<dbReference type="SUPFAM" id="SSF52540">
    <property type="entry name" value="P-loop containing nucleoside triphosphate hydrolases"/>
    <property type="match status" value="1"/>
</dbReference>
<dbReference type="PROSITE" id="PS51902">
    <property type="entry name" value="CLPX_ZB"/>
    <property type="match status" value="1"/>
</dbReference>
<evidence type="ECO:0000255" key="1">
    <source>
        <dbReference type="HAMAP-Rule" id="MF_00175"/>
    </source>
</evidence>
<evidence type="ECO:0000255" key="2">
    <source>
        <dbReference type="PROSITE-ProRule" id="PRU01250"/>
    </source>
</evidence>
<reference key="1">
    <citation type="journal article" date="2009" name="PLoS Genet.">
        <title>Organised genome dynamics in the Escherichia coli species results in highly diverse adaptive paths.</title>
        <authorList>
            <person name="Touchon M."/>
            <person name="Hoede C."/>
            <person name="Tenaillon O."/>
            <person name="Barbe V."/>
            <person name="Baeriswyl S."/>
            <person name="Bidet P."/>
            <person name="Bingen E."/>
            <person name="Bonacorsi S."/>
            <person name="Bouchier C."/>
            <person name="Bouvet O."/>
            <person name="Calteau A."/>
            <person name="Chiapello H."/>
            <person name="Clermont O."/>
            <person name="Cruveiller S."/>
            <person name="Danchin A."/>
            <person name="Diard M."/>
            <person name="Dossat C."/>
            <person name="Karoui M.E."/>
            <person name="Frapy E."/>
            <person name="Garry L."/>
            <person name="Ghigo J.M."/>
            <person name="Gilles A.M."/>
            <person name="Johnson J."/>
            <person name="Le Bouguenec C."/>
            <person name="Lescat M."/>
            <person name="Mangenot S."/>
            <person name="Martinez-Jehanne V."/>
            <person name="Matic I."/>
            <person name="Nassif X."/>
            <person name="Oztas S."/>
            <person name="Petit M.A."/>
            <person name="Pichon C."/>
            <person name="Rouy Z."/>
            <person name="Ruf C.S."/>
            <person name="Schneider D."/>
            <person name="Tourret J."/>
            <person name="Vacherie B."/>
            <person name="Vallenet D."/>
            <person name="Medigue C."/>
            <person name="Rocha E.P.C."/>
            <person name="Denamur E."/>
        </authorList>
    </citation>
    <scope>NUCLEOTIDE SEQUENCE [LARGE SCALE GENOMIC DNA]</scope>
    <source>
        <strain>UMN026 / ExPEC</strain>
    </source>
</reference>
<gene>
    <name evidence="1" type="primary">clpX</name>
    <name type="ordered locus">ECUMN_0478</name>
</gene>
<feature type="chain" id="PRO_1000118369" description="ATP-dependent Clp protease ATP-binding subunit ClpX">
    <location>
        <begin position="1"/>
        <end position="424"/>
    </location>
</feature>
<feature type="domain" description="ClpX-type ZB" evidence="2">
    <location>
        <begin position="2"/>
        <end position="56"/>
    </location>
</feature>
<feature type="binding site" evidence="2">
    <location>
        <position position="15"/>
    </location>
    <ligand>
        <name>Zn(2+)</name>
        <dbReference type="ChEBI" id="CHEBI:29105"/>
    </ligand>
</feature>
<feature type="binding site" evidence="2">
    <location>
        <position position="18"/>
    </location>
    <ligand>
        <name>Zn(2+)</name>
        <dbReference type="ChEBI" id="CHEBI:29105"/>
    </ligand>
</feature>
<feature type="binding site" evidence="2">
    <location>
        <position position="37"/>
    </location>
    <ligand>
        <name>Zn(2+)</name>
        <dbReference type="ChEBI" id="CHEBI:29105"/>
    </ligand>
</feature>
<feature type="binding site" evidence="2">
    <location>
        <position position="40"/>
    </location>
    <ligand>
        <name>Zn(2+)</name>
        <dbReference type="ChEBI" id="CHEBI:29105"/>
    </ligand>
</feature>
<feature type="binding site" evidence="1">
    <location>
        <begin position="120"/>
        <end position="127"/>
    </location>
    <ligand>
        <name>ATP</name>
        <dbReference type="ChEBI" id="CHEBI:30616"/>
    </ligand>
</feature>
<proteinExistence type="inferred from homology"/>
<accession>B7N8Z2</accession>
<organism>
    <name type="scientific">Escherichia coli O17:K52:H18 (strain UMN026 / ExPEC)</name>
    <dbReference type="NCBI Taxonomy" id="585056"/>
    <lineage>
        <taxon>Bacteria</taxon>
        <taxon>Pseudomonadati</taxon>
        <taxon>Pseudomonadota</taxon>
        <taxon>Gammaproteobacteria</taxon>
        <taxon>Enterobacterales</taxon>
        <taxon>Enterobacteriaceae</taxon>
        <taxon>Escherichia</taxon>
    </lineage>
</organism>
<protein>
    <recommendedName>
        <fullName evidence="1">ATP-dependent Clp protease ATP-binding subunit ClpX</fullName>
    </recommendedName>
</protein>
<keyword id="KW-0067">ATP-binding</keyword>
<keyword id="KW-0143">Chaperone</keyword>
<keyword id="KW-0479">Metal-binding</keyword>
<keyword id="KW-0547">Nucleotide-binding</keyword>
<keyword id="KW-0862">Zinc</keyword>
<comment type="function">
    <text evidence="1">ATP-dependent specificity component of the Clp protease. It directs the protease to specific substrates. Can perform chaperone functions in the absence of ClpP.</text>
</comment>
<comment type="subunit">
    <text evidence="1">Component of the ClpX-ClpP complex. Forms a hexameric ring that, in the presence of ATP, binds to fourteen ClpP subunits assembled into a disk-like structure with a central cavity, resembling the structure of eukaryotic proteasomes.</text>
</comment>
<comment type="similarity">
    <text evidence="1">Belongs to the ClpX chaperone family.</text>
</comment>
<sequence>MTDKRKDGSGKLLYCSFCGKSQHEVRKLIAGPSVYICDECVDLCNDIIREEIKEVAPHRERSALPTPHEIRNHLDDYVIGQEQAKKVLAVAVYNHYKRLRNGDTSNGVELGKSNILLIGPTGSGKTLLAETLARLLDVPFTMADATTLTEAGYVGEDVENIIQKLLQKCDYDVQKAQRGIVYIDEIDKISRKSDNPSITRDVSGEGVQQALLKLIEGTVAAVPPQGGRKHPQQEFLQVDTSKILFICGGAFAGLDKVISHRVETGSGIGFGATVKAKSDKASEGELLAQVEPEDLIKFGLIPEFIGRLPVVATLNELSEEALIQILKEPKNALTKQYQALFNLEGVDLEFRDEALDAIAKKAMARKTGARGLRSIVEAALLDTMYDLPSMEDVEKVVIDESVIDGQSKPLLIYGKPEAQQASGE</sequence>